<protein>
    <recommendedName>
        <fullName evidence="9">Protein SOSEKI 2</fullName>
        <shortName evidence="10">AtSOK2</shortName>
    </recommendedName>
    <alternativeName>
        <fullName evidence="8">Protein UPSTREAM OF FLC</fullName>
    </alternativeName>
</protein>
<proteinExistence type="evidence at protein level"/>
<gene>
    <name evidence="9" type="primary">SOK2</name>
    <name evidence="8" type="synonym">UFC</name>
    <name evidence="12" type="ordered locus">At5g10150</name>
    <name evidence="13" type="ORF">T31P16.140</name>
</gene>
<sequence length="414" mass="47953">MEAVRCRRGRENNKSPERIIRSLNHHQHDEELEEEVKTKKPIFRRVQVVYYLTRNGHLEHPHFIEVISPVNQPLRLRDVMNRLTILRGKCMTSQYAWSCKRSYRNGFVWNDLAENDVIYPSDCAEYVLKGSEITDKFQEVHVNRPLSGSIQEAPKSRLLRSKLKPQNRTASFDDAELYVGEEEEEEDGEYELYEEKTSYTSSTTPQSRCSRGVSTETMESTEQKPNLTKTEQDLQVRSDSSDLTRSNPVVKPRRHEVSTRVEDGDPVEPGSGRGSMWLQMISCGHIATKYYAPSVMNPRQKEENLRKGVLCKNIVKKTVVDDEREMIRFMSENPRFGNPQAEEKEYFSGSIVESVSQERVTAEPSLRRSNSFNEERSKIVEMAKETKKKEERSMAKVKCIPRTCLMSSSKQIKK</sequence>
<feature type="chain" id="PRO_0000423724" description="Protein SOSEKI 2">
    <location>
        <begin position="1"/>
        <end position="414"/>
    </location>
</feature>
<feature type="region of interest" description="DIX-like oligomerization domain" evidence="6">
    <location>
        <begin position="44"/>
        <end position="135"/>
    </location>
</feature>
<feature type="region of interest" description="Disordered" evidence="2">
    <location>
        <begin position="171"/>
        <end position="273"/>
    </location>
</feature>
<feature type="short sequence motif" description="Association to cell membranes" evidence="1">
    <location>
        <begin position="283"/>
        <end position="284"/>
    </location>
</feature>
<feature type="compositionally biased region" description="Acidic residues" evidence="2">
    <location>
        <begin position="173"/>
        <end position="192"/>
    </location>
</feature>
<feature type="compositionally biased region" description="Polar residues" evidence="2">
    <location>
        <begin position="205"/>
        <end position="229"/>
    </location>
</feature>
<feature type="compositionally biased region" description="Basic and acidic residues" evidence="2">
    <location>
        <begin position="230"/>
        <end position="242"/>
    </location>
</feature>
<dbReference type="EMBL" id="AL356332">
    <property type="protein sequence ID" value="CAB92056.1"/>
    <property type="molecule type" value="Genomic_DNA"/>
</dbReference>
<dbReference type="EMBL" id="CP002688">
    <property type="protein sequence ID" value="AED91502.1"/>
    <property type="molecule type" value="Genomic_DNA"/>
</dbReference>
<dbReference type="EMBL" id="BT014891">
    <property type="protein sequence ID" value="AAT44967.1"/>
    <property type="molecule type" value="mRNA"/>
</dbReference>
<dbReference type="EMBL" id="BT015021">
    <property type="protein sequence ID" value="AAT70472.1"/>
    <property type="molecule type" value="mRNA"/>
</dbReference>
<dbReference type="PIR" id="T50019">
    <property type="entry name" value="T50019"/>
</dbReference>
<dbReference type="RefSeq" id="NP_196577.1">
    <property type="nucleotide sequence ID" value="NM_121053.5"/>
</dbReference>
<dbReference type="SMR" id="Q9LX14"/>
<dbReference type="FunCoup" id="Q9LX14">
    <property type="interactions" value="181"/>
</dbReference>
<dbReference type="STRING" id="3702.Q9LX14"/>
<dbReference type="iPTMnet" id="Q9LX14"/>
<dbReference type="PaxDb" id="3702-AT5G10150.1"/>
<dbReference type="EnsemblPlants" id="AT5G10150.1">
    <property type="protein sequence ID" value="AT5G10150.1"/>
    <property type="gene ID" value="AT5G10150"/>
</dbReference>
<dbReference type="GeneID" id="830879"/>
<dbReference type="Gramene" id="AT5G10150.1">
    <property type="protein sequence ID" value="AT5G10150.1"/>
    <property type="gene ID" value="AT5G10150"/>
</dbReference>
<dbReference type="KEGG" id="ath:AT5G10150"/>
<dbReference type="Araport" id="AT5G10150"/>
<dbReference type="TAIR" id="AT5G10150">
    <property type="gene designation" value="SOK2"/>
</dbReference>
<dbReference type="eggNOG" id="ENOG502QVHU">
    <property type="taxonomic scope" value="Eukaryota"/>
</dbReference>
<dbReference type="HOGENOM" id="CLU_025038_1_0_1"/>
<dbReference type="InParanoid" id="Q9LX14"/>
<dbReference type="PhylomeDB" id="Q9LX14"/>
<dbReference type="PRO" id="PR:Q9LX14"/>
<dbReference type="Proteomes" id="UP000006548">
    <property type="component" value="Chromosome 5"/>
</dbReference>
<dbReference type="ExpressionAtlas" id="Q9LX14">
    <property type="expression patterns" value="baseline and differential"/>
</dbReference>
<dbReference type="GO" id="GO:0009925">
    <property type="term" value="C:basal plasma membrane"/>
    <property type="evidence" value="ECO:0000314"/>
    <property type="project" value="TAIR"/>
</dbReference>
<dbReference type="GO" id="GO:0042803">
    <property type="term" value="F:protein homodimerization activity"/>
    <property type="evidence" value="ECO:0000314"/>
    <property type="project" value="UniProtKB"/>
</dbReference>
<dbReference type="GO" id="GO:0051301">
    <property type="term" value="P:cell division"/>
    <property type="evidence" value="ECO:0007669"/>
    <property type="project" value="UniProtKB-KW"/>
</dbReference>
<dbReference type="GO" id="GO:1905392">
    <property type="term" value="P:plant organ morphogenesis"/>
    <property type="evidence" value="ECO:0000315"/>
    <property type="project" value="UniProtKB"/>
</dbReference>
<dbReference type="GO" id="GO:0051258">
    <property type="term" value="P:protein polymerization"/>
    <property type="evidence" value="ECO:0000314"/>
    <property type="project" value="UniProtKB"/>
</dbReference>
<dbReference type="GO" id="GO:0051302">
    <property type="term" value="P:regulation of cell division"/>
    <property type="evidence" value="ECO:0000315"/>
    <property type="project" value="UniProtKB"/>
</dbReference>
<dbReference type="GO" id="GO:2000067">
    <property type="term" value="P:regulation of root morphogenesis"/>
    <property type="evidence" value="ECO:0000315"/>
    <property type="project" value="UniProtKB"/>
</dbReference>
<dbReference type="GO" id="GO:0090708">
    <property type="term" value="P:specification of plant organ axis polarity"/>
    <property type="evidence" value="ECO:0000315"/>
    <property type="project" value="UniProtKB"/>
</dbReference>
<dbReference type="InterPro" id="IPR010369">
    <property type="entry name" value="SOK"/>
</dbReference>
<dbReference type="InterPro" id="IPR048351">
    <property type="entry name" value="SOK_DIX"/>
</dbReference>
<dbReference type="InterPro" id="IPR021182">
    <property type="entry name" value="SOK_magnoliopsida"/>
</dbReference>
<dbReference type="PANTHER" id="PTHR31083:SF18">
    <property type="entry name" value="PROTEIN SOSEKI 2"/>
    <property type="match status" value="1"/>
</dbReference>
<dbReference type="PANTHER" id="PTHR31083">
    <property type="entry name" value="UPSTREAM OF FLC PROTEIN (DUF966)"/>
    <property type="match status" value="1"/>
</dbReference>
<dbReference type="Pfam" id="PF06136">
    <property type="entry name" value="SOK"/>
    <property type="match status" value="1"/>
</dbReference>
<dbReference type="PIRSF" id="PIRSF031043">
    <property type="entry name" value="UCP031043"/>
    <property type="match status" value="1"/>
</dbReference>
<evidence type="ECO:0000250" key="1">
    <source>
        <dbReference type="UniProtKB" id="Q9SYJ8"/>
    </source>
</evidence>
<evidence type="ECO:0000256" key="2">
    <source>
        <dbReference type="SAM" id="MobiDB-lite"/>
    </source>
</evidence>
<evidence type="ECO:0000269" key="3">
    <source>
    </source>
</evidence>
<evidence type="ECO:0000269" key="4">
    <source>
    </source>
</evidence>
<evidence type="ECO:0000269" key="5">
    <source>
    </source>
</evidence>
<evidence type="ECO:0000269" key="6">
    <source>
    </source>
</evidence>
<evidence type="ECO:0000269" key="7">
    <source>
    </source>
</evidence>
<evidence type="ECO:0000303" key="8">
    <source>
    </source>
</evidence>
<evidence type="ECO:0000303" key="9">
    <source>
    </source>
</evidence>
<evidence type="ECO:0000303" key="10">
    <source>
    </source>
</evidence>
<evidence type="ECO:0000305" key="11"/>
<evidence type="ECO:0000312" key="12">
    <source>
        <dbReference type="Araport" id="AT5G10150"/>
    </source>
</evidence>
<evidence type="ECO:0000312" key="13">
    <source>
        <dbReference type="EMBL" id="CAB92056.1"/>
    </source>
</evidence>
<organism>
    <name type="scientific">Arabidopsis thaliana</name>
    <name type="common">Mouse-ear cress</name>
    <dbReference type="NCBI Taxonomy" id="3702"/>
    <lineage>
        <taxon>Eukaryota</taxon>
        <taxon>Viridiplantae</taxon>
        <taxon>Streptophyta</taxon>
        <taxon>Embryophyta</taxon>
        <taxon>Tracheophyta</taxon>
        <taxon>Spermatophyta</taxon>
        <taxon>Magnoliopsida</taxon>
        <taxon>eudicotyledons</taxon>
        <taxon>Gunneridae</taxon>
        <taxon>Pentapetalae</taxon>
        <taxon>rosids</taxon>
        <taxon>malvids</taxon>
        <taxon>Brassicales</taxon>
        <taxon>Brassicaceae</taxon>
        <taxon>Camelineae</taxon>
        <taxon>Arabidopsis</taxon>
    </lineage>
</organism>
<name>SOK2_ARATH</name>
<comment type="function">
    <text evidence="3 5 6 7">Part of a three-gene cluster containing FLC, UFC and DFC, which is coordinately regulated in response to vernalization (PubMed:15186749, PubMed:18156133). Also regulated by FLX (PubMed:15186749). SOSEKI proteins (SOK1-5) locally interpret global polarity cues and can influence cell division orientation to coordinate cell polarization relative to body axes, probably by guiding ANGUSTIFOLIA (AN) polarized localization (PubMed:30737509, PubMed:32004461).</text>
</comment>
<comment type="subunit">
    <text evidence="6 7">Homodimer (PubMed:30737509). Forms long polymer filaments with other SOKs proteins polymers (e.g. SOK1, SOK2, SOK3 and SOK4) crucial for polar localization and biological activity (PubMed:32004461). Binds to ANGUSTIFOLIA (AN) (PubMed:32004461).</text>
</comment>
<comment type="subcellular location">
    <subcellularLocation>
        <location evidence="6">Cell membrane</location>
        <topology evidence="6">Peripheral membrane protein</topology>
        <orientation evidence="6">Cytoplasmic side</orientation>
    </subcellularLocation>
    <text evidence="6">SOSEKI proteins integrate apical-basal and radial organismal axes to localize to polar cell edges, pointing towards the epidermis, mainly to inner basal edges.</text>
</comment>
<comment type="tissue specificity">
    <text evidence="6">Expressed during embryogenesis and in roots.</text>
</comment>
<comment type="developmental stage">
    <text evidence="6">During embryogenesis, first observed at the globular stage and accumulates in forming cotyledons at the heart stage (PubMed:30737509). Expressed in the inner basal edge of endodermal cells in the primary and lateral roots (PubMed:30737509).</text>
</comment>
<comment type="induction">
    <text evidence="3 4 5">Epigenetically down-regulated by vernalization (PubMed:15186749, PubMed:18156133). Not regulated by SUF4 (PubMed:17138694).</text>
</comment>
<comment type="domain">
    <text evidence="6">The DIX-like oligomerization domain is required for polymerization, edge localization and biological activity.</text>
</comment>
<comment type="miscellaneous">
    <text evidence="9">'Soseki' means cornerstone in Japanese.</text>
</comment>
<comment type="similarity">
    <text evidence="11">Belongs to the SOSEKI family.</text>
</comment>
<reference key="1">
    <citation type="journal article" date="2000" name="Nature">
        <title>Sequence and analysis of chromosome 5 of the plant Arabidopsis thaliana.</title>
        <authorList>
            <person name="Tabata S."/>
            <person name="Kaneko T."/>
            <person name="Nakamura Y."/>
            <person name="Kotani H."/>
            <person name="Kato T."/>
            <person name="Asamizu E."/>
            <person name="Miyajima N."/>
            <person name="Sasamoto S."/>
            <person name="Kimura T."/>
            <person name="Hosouchi T."/>
            <person name="Kawashima K."/>
            <person name="Kohara M."/>
            <person name="Matsumoto M."/>
            <person name="Matsuno A."/>
            <person name="Muraki A."/>
            <person name="Nakayama S."/>
            <person name="Nakazaki N."/>
            <person name="Naruo K."/>
            <person name="Okumura S."/>
            <person name="Shinpo S."/>
            <person name="Takeuchi C."/>
            <person name="Wada T."/>
            <person name="Watanabe A."/>
            <person name="Yamada M."/>
            <person name="Yasuda M."/>
            <person name="Sato S."/>
            <person name="de la Bastide M."/>
            <person name="Huang E."/>
            <person name="Spiegel L."/>
            <person name="Gnoj L."/>
            <person name="O'Shaughnessy A."/>
            <person name="Preston R."/>
            <person name="Habermann K."/>
            <person name="Murray J."/>
            <person name="Johnson D."/>
            <person name="Rohlfing T."/>
            <person name="Nelson J."/>
            <person name="Stoneking T."/>
            <person name="Pepin K."/>
            <person name="Spieth J."/>
            <person name="Sekhon M."/>
            <person name="Armstrong J."/>
            <person name="Becker M."/>
            <person name="Belter E."/>
            <person name="Cordum H."/>
            <person name="Cordes M."/>
            <person name="Courtney L."/>
            <person name="Courtney W."/>
            <person name="Dante M."/>
            <person name="Du H."/>
            <person name="Edwards J."/>
            <person name="Fryman J."/>
            <person name="Haakensen B."/>
            <person name="Lamar E."/>
            <person name="Latreille P."/>
            <person name="Leonard S."/>
            <person name="Meyer R."/>
            <person name="Mulvaney E."/>
            <person name="Ozersky P."/>
            <person name="Riley A."/>
            <person name="Strowmatt C."/>
            <person name="Wagner-McPherson C."/>
            <person name="Wollam A."/>
            <person name="Yoakum M."/>
            <person name="Bell M."/>
            <person name="Dedhia N."/>
            <person name="Parnell L."/>
            <person name="Shah R."/>
            <person name="Rodriguez M."/>
            <person name="Hoon See L."/>
            <person name="Vil D."/>
            <person name="Baker J."/>
            <person name="Kirchoff K."/>
            <person name="Toth K."/>
            <person name="King L."/>
            <person name="Bahret A."/>
            <person name="Miller B."/>
            <person name="Marra M.A."/>
            <person name="Martienssen R."/>
            <person name="McCombie W.R."/>
            <person name="Wilson R.K."/>
            <person name="Murphy G."/>
            <person name="Bancroft I."/>
            <person name="Volckaert G."/>
            <person name="Wambutt R."/>
            <person name="Duesterhoeft A."/>
            <person name="Stiekema W."/>
            <person name="Pohl T."/>
            <person name="Entian K.-D."/>
            <person name="Terryn N."/>
            <person name="Hartley N."/>
            <person name="Bent E."/>
            <person name="Johnson S."/>
            <person name="Langham S.-A."/>
            <person name="McCullagh B."/>
            <person name="Robben J."/>
            <person name="Grymonprez B."/>
            <person name="Zimmermann W."/>
            <person name="Ramsperger U."/>
            <person name="Wedler H."/>
            <person name="Balke K."/>
            <person name="Wedler E."/>
            <person name="Peters S."/>
            <person name="van Staveren M."/>
            <person name="Dirkse W."/>
            <person name="Mooijman P."/>
            <person name="Klein Lankhorst R."/>
            <person name="Weitzenegger T."/>
            <person name="Bothe G."/>
            <person name="Rose M."/>
            <person name="Hauf J."/>
            <person name="Berneiser S."/>
            <person name="Hempel S."/>
            <person name="Feldpausch M."/>
            <person name="Lamberth S."/>
            <person name="Villarroel R."/>
            <person name="Gielen J."/>
            <person name="Ardiles W."/>
            <person name="Bents O."/>
            <person name="Lemcke K."/>
            <person name="Kolesov G."/>
            <person name="Mayer K.F.X."/>
            <person name="Rudd S."/>
            <person name="Schoof H."/>
            <person name="Schueller C."/>
            <person name="Zaccaria P."/>
            <person name="Mewes H.-W."/>
            <person name="Bevan M."/>
            <person name="Fransz P.F."/>
        </authorList>
    </citation>
    <scope>NUCLEOTIDE SEQUENCE [LARGE SCALE GENOMIC DNA]</scope>
    <source>
        <strain>cv. Columbia</strain>
    </source>
</reference>
<reference key="2">
    <citation type="journal article" date="2017" name="Plant J.">
        <title>Araport11: a complete reannotation of the Arabidopsis thaliana reference genome.</title>
        <authorList>
            <person name="Cheng C.Y."/>
            <person name="Krishnakumar V."/>
            <person name="Chan A.P."/>
            <person name="Thibaud-Nissen F."/>
            <person name="Schobel S."/>
            <person name="Town C.D."/>
        </authorList>
    </citation>
    <scope>GENOME REANNOTATION</scope>
    <source>
        <strain>cv. Columbia</strain>
    </source>
</reference>
<reference key="3">
    <citation type="submission" date="2004-07" db="EMBL/GenBank/DDBJ databases">
        <title>Arabidopsis ORF clones.</title>
        <authorList>
            <person name="Shinn P."/>
            <person name="Chen H."/>
            <person name="Cheuk R."/>
            <person name="Kim C.J."/>
            <person name="Ecker J.R."/>
        </authorList>
    </citation>
    <scope>NUCLEOTIDE SEQUENCE [LARGE SCALE MRNA]</scope>
</reference>
<reference key="4">
    <citation type="journal article" date="2004" name="Curr. Biol.">
        <title>A cluster of Arabidopsis genes with a coordinate response to an environmental stimulus.</title>
        <authorList>
            <person name="Finnegan E.J."/>
            <person name="Sheldon C.C."/>
            <person name="Jardinaud F."/>
            <person name="Peacock W.J."/>
            <person name="Dennis E.S."/>
        </authorList>
    </citation>
    <scope>FUNCTION</scope>
    <scope>INDUCTION BY VERNALIZATION</scope>
</reference>
<reference key="5">
    <citation type="journal article" date="2006" name="Plant Cell">
        <title>SUPPRESSOR OF FRIGIDA4, encoding a C2H2-Type zinc finger protein, represses flowering by transcriptional activation of Arabidopsis FLOWERING LOCUS C.</title>
        <authorList>
            <person name="Kim S."/>
            <person name="Choi K."/>
            <person name="Park C."/>
            <person name="Hwang H.J."/>
            <person name="Lee I."/>
        </authorList>
    </citation>
    <scope>INDUCTION BY SUF4</scope>
</reference>
<reference key="6">
    <citation type="journal article" date="2008" name="Plant Cell Physiol.">
        <title>The FLX gene of Arabidopsis is required for FRI-dependent activation of FLC expression.</title>
        <authorList>
            <person name="Andersson C.R."/>
            <person name="Helliwell C.A."/>
            <person name="Bagnall D.J."/>
            <person name="Hughes T.P."/>
            <person name="Finnegan E.J."/>
            <person name="Peacock W.J."/>
            <person name="Dennis E.S."/>
        </authorList>
    </citation>
    <scope>FUNCTION</scope>
    <scope>INDUCTION BY VERNALIZATION</scope>
    <source>
        <strain>cv. C24</strain>
    </source>
</reference>
<reference key="7">
    <citation type="journal article" date="2019" name="Nat. Plants">
        <title>A SOSEKI-based coordinate system interprets global polarity cues in Arabidopsis.</title>
        <authorList>
            <person name="Yoshida S."/>
            <person name="van der Schuren A."/>
            <person name="van Dop M."/>
            <person name="van Galen L."/>
            <person name="Saiga S."/>
            <person name="Adibi M."/>
            <person name="Moeller B."/>
            <person name="Ten Hove C.A."/>
            <person name="Marhavy P."/>
            <person name="Smith R."/>
            <person name="Friml J."/>
            <person name="Weijers D."/>
        </authorList>
    </citation>
    <scope>FUNCTION</scope>
    <scope>SUBCELLULAR LOCATION</scope>
    <scope>DEVELOPMENTAL STAGE</scope>
    <scope>TISSUE SPECIFICITY</scope>
    <scope>DOMAIN</scope>
    <scope>SUBUNIT</scope>
    <source>
        <strain>cv. Columbia</strain>
    </source>
</reference>
<reference key="8">
    <citation type="journal article" date="2020" name="Cell">
        <title>DIX domain polymerization drives assembly of plant cell polarity complexes.</title>
        <authorList>
            <person name="van Dop M."/>
            <person name="Fiedler M."/>
            <person name="Mutte S."/>
            <person name="de Keijzer J."/>
            <person name="Olijslager L."/>
            <person name="Albrecht C."/>
            <person name="Liao C.Y."/>
            <person name="Janson M.E."/>
            <person name="Bienz M."/>
            <person name="Weijers D."/>
        </authorList>
    </citation>
    <scope>FUNCTION</scope>
    <scope>INTERACTION WITH ANGUSTIFOLIA</scope>
    <scope>SUBUNIT</scope>
    <scope>GENE FAMILY</scope>
</reference>
<accession>Q9LX14</accession>
<keyword id="KW-0131">Cell cycle</keyword>
<keyword id="KW-0132">Cell division</keyword>
<keyword id="KW-1003">Cell membrane</keyword>
<keyword id="KW-0217">Developmental protein</keyword>
<keyword id="KW-0472">Membrane</keyword>
<keyword id="KW-1185">Reference proteome</keyword>